<reference key="1">
    <citation type="submission" date="2003-02" db="EMBL/GenBank/DDBJ databases">
        <title>A novel program of gene expression driven by Notch, is associated with commitment in neural stem cell lines.</title>
        <authorList>
            <person name="Uwanogho D.A."/>
            <person name="Mellodew K."/>
            <person name="Molloy G."/>
            <person name="Galloway D."/>
            <person name="Starling B.B."/>
            <person name="Crossland N."/>
            <person name="Price J."/>
        </authorList>
    </citation>
    <scope>NUCLEOTIDE SEQUENCE [MRNA]</scope>
    <source>
        <strain>C57BL/6J</strain>
    </source>
</reference>
<reference key="2">
    <citation type="journal article" date="2004" name="DNA Res.">
        <title>Prediction of the coding sequences of mouse homologues of KIAA gene: IV. The complete nucleotide sequences of 500 mouse KIAA-homologous cDNAs identified by screening of terminal sequences of cDNA clones randomly sampled from size-fractionated libraries.</title>
        <authorList>
            <person name="Okazaki N."/>
            <person name="Kikuno R."/>
            <person name="Ohara R."/>
            <person name="Inamoto S."/>
            <person name="Koseki H."/>
            <person name="Hiraoka S."/>
            <person name="Saga Y."/>
            <person name="Seino S."/>
            <person name="Nishimura M."/>
            <person name="Kaisho T."/>
            <person name="Hoshino K."/>
            <person name="Kitamura H."/>
            <person name="Nagase T."/>
            <person name="Ohara O."/>
            <person name="Koga H."/>
        </authorList>
    </citation>
    <scope>NUCLEOTIDE SEQUENCE [LARGE SCALE MRNA]</scope>
    <source>
        <tissue>Spleen</tissue>
    </source>
</reference>
<reference key="3">
    <citation type="journal article" date="2005" name="Science">
        <title>The transcriptional landscape of the mammalian genome.</title>
        <authorList>
            <person name="Carninci P."/>
            <person name="Kasukawa T."/>
            <person name="Katayama S."/>
            <person name="Gough J."/>
            <person name="Frith M.C."/>
            <person name="Maeda N."/>
            <person name="Oyama R."/>
            <person name="Ravasi T."/>
            <person name="Lenhard B."/>
            <person name="Wells C."/>
            <person name="Kodzius R."/>
            <person name="Shimokawa K."/>
            <person name="Bajic V.B."/>
            <person name="Brenner S.E."/>
            <person name="Batalov S."/>
            <person name="Forrest A.R."/>
            <person name="Zavolan M."/>
            <person name="Davis M.J."/>
            <person name="Wilming L.G."/>
            <person name="Aidinis V."/>
            <person name="Allen J.E."/>
            <person name="Ambesi-Impiombato A."/>
            <person name="Apweiler R."/>
            <person name="Aturaliya R.N."/>
            <person name="Bailey T.L."/>
            <person name="Bansal M."/>
            <person name="Baxter L."/>
            <person name="Beisel K.W."/>
            <person name="Bersano T."/>
            <person name="Bono H."/>
            <person name="Chalk A.M."/>
            <person name="Chiu K.P."/>
            <person name="Choudhary V."/>
            <person name="Christoffels A."/>
            <person name="Clutterbuck D.R."/>
            <person name="Crowe M.L."/>
            <person name="Dalla E."/>
            <person name="Dalrymple B.P."/>
            <person name="de Bono B."/>
            <person name="Della Gatta G."/>
            <person name="di Bernardo D."/>
            <person name="Down T."/>
            <person name="Engstrom P."/>
            <person name="Fagiolini M."/>
            <person name="Faulkner G."/>
            <person name="Fletcher C.F."/>
            <person name="Fukushima T."/>
            <person name="Furuno M."/>
            <person name="Futaki S."/>
            <person name="Gariboldi M."/>
            <person name="Georgii-Hemming P."/>
            <person name="Gingeras T.R."/>
            <person name="Gojobori T."/>
            <person name="Green R.E."/>
            <person name="Gustincich S."/>
            <person name="Harbers M."/>
            <person name="Hayashi Y."/>
            <person name="Hensch T.K."/>
            <person name="Hirokawa N."/>
            <person name="Hill D."/>
            <person name="Huminiecki L."/>
            <person name="Iacono M."/>
            <person name="Ikeo K."/>
            <person name="Iwama A."/>
            <person name="Ishikawa T."/>
            <person name="Jakt M."/>
            <person name="Kanapin A."/>
            <person name="Katoh M."/>
            <person name="Kawasawa Y."/>
            <person name="Kelso J."/>
            <person name="Kitamura H."/>
            <person name="Kitano H."/>
            <person name="Kollias G."/>
            <person name="Krishnan S.P."/>
            <person name="Kruger A."/>
            <person name="Kummerfeld S.K."/>
            <person name="Kurochkin I.V."/>
            <person name="Lareau L.F."/>
            <person name="Lazarevic D."/>
            <person name="Lipovich L."/>
            <person name="Liu J."/>
            <person name="Liuni S."/>
            <person name="McWilliam S."/>
            <person name="Madan Babu M."/>
            <person name="Madera M."/>
            <person name="Marchionni L."/>
            <person name="Matsuda H."/>
            <person name="Matsuzawa S."/>
            <person name="Miki H."/>
            <person name="Mignone F."/>
            <person name="Miyake S."/>
            <person name="Morris K."/>
            <person name="Mottagui-Tabar S."/>
            <person name="Mulder N."/>
            <person name="Nakano N."/>
            <person name="Nakauchi H."/>
            <person name="Ng P."/>
            <person name="Nilsson R."/>
            <person name="Nishiguchi S."/>
            <person name="Nishikawa S."/>
            <person name="Nori F."/>
            <person name="Ohara O."/>
            <person name="Okazaki Y."/>
            <person name="Orlando V."/>
            <person name="Pang K.C."/>
            <person name="Pavan W.J."/>
            <person name="Pavesi G."/>
            <person name="Pesole G."/>
            <person name="Petrovsky N."/>
            <person name="Piazza S."/>
            <person name="Reed J."/>
            <person name="Reid J.F."/>
            <person name="Ring B.Z."/>
            <person name="Ringwald M."/>
            <person name="Rost B."/>
            <person name="Ruan Y."/>
            <person name="Salzberg S.L."/>
            <person name="Sandelin A."/>
            <person name="Schneider C."/>
            <person name="Schoenbach C."/>
            <person name="Sekiguchi K."/>
            <person name="Semple C.A."/>
            <person name="Seno S."/>
            <person name="Sessa L."/>
            <person name="Sheng Y."/>
            <person name="Shibata Y."/>
            <person name="Shimada H."/>
            <person name="Shimada K."/>
            <person name="Silva D."/>
            <person name="Sinclair B."/>
            <person name="Sperling S."/>
            <person name="Stupka E."/>
            <person name="Sugiura K."/>
            <person name="Sultana R."/>
            <person name="Takenaka Y."/>
            <person name="Taki K."/>
            <person name="Tammoja K."/>
            <person name="Tan S.L."/>
            <person name="Tang S."/>
            <person name="Taylor M.S."/>
            <person name="Tegner J."/>
            <person name="Teichmann S.A."/>
            <person name="Ueda H.R."/>
            <person name="van Nimwegen E."/>
            <person name="Verardo R."/>
            <person name="Wei C.L."/>
            <person name="Yagi K."/>
            <person name="Yamanishi H."/>
            <person name="Zabarovsky E."/>
            <person name="Zhu S."/>
            <person name="Zimmer A."/>
            <person name="Hide W."/>
            <person name="Bult C."/>
            <person name="Grimmond S.M."/>
            <person name="Teasdale R.D."/>
            <person name="Liu E.T."/>
            <person name="Brusic V."/>
            <person name="Quackenbush J."/>
            <person name="Wahlestedt C."/>
            <person name="Mattick J.S."/>
            <person name="Hume D.A."/>
            <person name="Kai C."/>
            <person name="Sasaki D."/>
            <person name="Tomaru Y."/>
            <person name="Fukuda S."/>
            <person name="Kanamori-Katayama M."/>
            <person name="Suzuki M."/>
            <person name="Aoki J."/>
            <person name="Arakawa T."/>
            <person name="Iida J."/>
            <person name="Imamura K."/>
            <person name="Itoh M."/>
            <person name="Kato T."/>
            <person name="Kawaji H."/>
            <person name="Kawagashira N."/>
            <person name="Kawashima T."/>
            <person name="Kojima M."/>
            <person name="Kondo S."/>
            <person name="Konno H."/>
            <person name="Nakano K."/>
            <person name="Ninomiya N."/>
            <person name="Nishio T."/>
            <person name="Okada M."/>
            <person name="Plessy C."/>
            <person name="Shibata K."/>
            <person name="Shiraki T."/>
            <person name="Suzuki S."/>
            <person name="Tagami M."/>
            <person name="Waki K."/>
            <person name="Watahiki A."/>
            <person name="Okamura-Oho Y."/>
            <person name="Suzuki H."/>
            <person name="Kawai J."/>
            <person name="Hayashizaki Y."/>
        </authorList>
    </citation>
    <scope>NUCLEOTIDE SEQUENCE [LARGE SCALE MRNA]</scope>
    <source>
        <strain>C57BL/6J</strain>
        <tissue>Cerebellum</tissue>
    </source>
</reference>
<reference key="4">
    <citation type="submission" date="2005-08" db="EMBL/GenBank/DDBJ databases">
        <authorList>
            <person name="Mural R.J."/>
            <person name="Adams M.D."/>
            <person name="Myers E.W."/>
            <person name="Smith H.O."/>
            <person name="Venter J.C."/>
        </authorList>
    </citation>
    <scope>NUCLEOTIDE SEQUENCE [LARGE SCALE GENOMIC DNA]</scope>
</reference>
<reference key="5">
    <citation type="journal article" date="2004" name="Genome Res.">
        <title>The status, quality, and expansion of the NIH full-length cDNA project: the Mammalian Gene Collection (MGC).</title>
        <authorList>
            <consortium name="The MGC Project Team"/>
        </authorList>
    </citation>
    <scope>NUCLEOTIDE SEQUENCE [LARGE SCALE MRNA]</scope>
    <source>
        <strain>FVB/N</strain>
        <tissue>Brain</tissue>
        <tissue>Liver</tissue>
    </source>
</reference>
<reference key="6">
    <citation type="journal article" date="2010" name="Cell">
        <title>A tissue-specific atlas of mouse protein phosphorylation and expression.</title>
        <authorList>
            <person name="Huttlin E.L."/>
            <person name="Jedrychowski M.P."/>
            <person name="Elias J.E."/>
            <person name="Goswami T."/>
            <person name="Rad R."/>
            <person name="Beausoleil S.A."/>
            <person name="Villen J."/>
            <person name="Haas W."/>
            <person name="Sowa M.E."/>
            <person name="Gygi S.P."/>
        </authorList>
    </citation>
    <scope>IDENTIFICATION BY MASS SPECTROMETRY [LARGE SCALE ANALYSIS]</scope>
    <source>
        <tissue>Testis</tissue>
    </source>
</reference>
<reference key="7">
    <citation type="journal article" date="2016" name="Exp. Cell Res.">
        <title>LRRC14 attenuates Toll-like receptor-mediated NF-kappa-B signaling through disruption of IKK complex.</title>
        <authorList>
            <person name="Wu C."/>
            <person name="Yang Y."/>
            <person name="Ou J."/>
            <person name="Zhu L."/>
            <person name="Zhao W."/>
            <person name="Cui J."/>
        </authorList>
    </citation>
    <scope>TISSUE SPECIFICITY</scope>
</reference>
<keyword id="KW-0963">Cytoplasm</keyword>
<keyword id="KW-0433">Leucine-rich repeat</keyword>
<keyword id="KW-1185">Reference proteome</keyword>
<keyword id="KW-0677">Repeat</keyword>
<comment type="function">
    <text evidence="1">Negatively regulates Toll-like receptor-mediated NF-kappa-B signaling by disrupting IKK core complex formation through interaction with IKBKB.</text>
</comment>
<comment type="subunit">
    <text evidence="1">Interacts with IKBKB; disrupts IKBKB-IKBKG interaction preventing I-kappa-B-kinase (IKK) core complex formation and leading to a decrease of IKBKB phosphorylation and NF-kappaB activation. Interacts with CHUK.</text>
</comment>
<comment type="subcellular location">
    <subcellularLocation>
        <location evidence="1">Cytoplasm</location>
    </subcellularLocation>
</comment>
<comment type="similarity">
    <text evidence="4">Belongs to the PRAME family. LRRC14 subfamily.</text>
</comment>
<comment type="sequence caution" evidence="4">
    <conflict type="miscellaneous discrepancy">
        <sequence resource="EMBL-CDS" id="BAD32149"/>
    </conflict>
    <text>Intron retention.</text>
</comment>
<evidence type="ECO:0000250" key="1">
    <source>
        <dbReference type="UniProtKB" id="Q15048"/>
    </source>
</evidence>
<evidence type="ECO:0000250" key="2">
    <source>
        <dbReference type="UniProtKB" id="Q3UWY1"/>
    </source>
</evidence>
<evidence type="ECO:0000303" key="3">
    <source>
    </source>
</evidence>
<evidence type="ECO:0000305" key="4"/>
<evidence type="ECO:0000312" key="5">
    <source>
        <dbReference type="MGI" id="MGI:2445060"/>
    </source>
</evidence>
<proteinExistence type="evidence at protein level"/>
<protein>
    <recommendedName>
        <fullName evidence="1">Leucine-rich repeat-containing protein 14</fullName>
    </recommendedName>
</protein>
<gene>
    <name evidence="5" type="primary">Lrrc14</name>
    <name evidence="3" type="synonym">Kiaa0014</name>
</gene>
<name>LRC14_MOUSE</name>
<sequence>MHTLVFLSTRQVLQCQPAACQALPLLPRELFPLLFKVAFMDKKTLVLRELVHTWPFPLLSFQQLLQECAHCSRALLQERLSTESMQAVILGLTARIHTQETEAGTQPLCRKHALRVLDMTGLLDDGVEQDPETMSMWDCTAAVARTCIAQQQGGTAEPGLSPVPVEIRVDLRVNRASYTFLREALQSSVASPLRLCCRDLRAEDLPMRNTVALLQLLDAGCLRRIDLRFNNLGLRGLSVIIPHVARFQHLASLRLHYVHGDSRQPSVDGEDNFRYFLAQMGRFMCLRELSMGSSLLSGRLDQLLSTLQRPLESLELAFCALLPEDLRFLAQSSHAAHLKKLDLSGNDLSGNQLTPFQGLLQAVATTLLHLELTECQLADAQLLATLPTLTRCASLRYLGLYGNPLSMAGLKELLRDSVVQAELRTVVHPFPVDCYEGLPWPPPASVLLEASINEEKFARVEAELHQLLLASGRAHVLWTTDIYGRLAADYFSL</sequence>
<feature type="chain" id="PRO_0000343681" description="Leucine-rich repeat-containing protein 14">
    <location>
        <begin position="1"/>
        <end position="493"/>
    </location>
</feature>
<feature type="repeat" description="LRR 1; degenerate" evidence="2">
    <location>
        <begin position="111"/>
        <end position="146"/>
    </location>
</feature>
<feature type="repeat" description="LRR 2; degenerate" evidence="2">
    <location>
        <begin position="194"/>
        <end position="218"/>
    </location>
</feature>
<feature type="repeat" description="LRR 3; degenerate" evidence="2">
    <location>
        <begin position="219"/>
        <end position="246"/>
    </location>
</feature>
<feature type="repeat" description="LRR 4; degenerate" evidence="2">
    <location>
        <begin position="247"/>
        <end position="282"/>
    </location>
</feature>
<feature type="repeat" description="LRR 5" evidence="2">
    <location>
        <begin position="283"/>
        <end position="307"/>
    </location>
</feature>
<feature type="repeat" description="LRR 6" evidence="2">
    <location>
        <begin position="308"/>
        <end position="339"/>
    </location>
</feature>
<feature type="repeat" description="LRR 7" evidence="2">
    <location>
        <begin position="340"/>
        <end position="360"/>
    </location>
</feature>
<feature type="repeat" description="LRR 8" evidence="2">
    <location>
        <begin position="364"/>
        <end position="391"/>
    </location>
</feature>
<feature type="repeat" description="LRR 9" evidence="2">
    <location>
        <begin position="392"/>
        <end position="416"/>
    </location>
</feature>
<feature type="sequence conflict" description="In Ref. 1; AAP23937." evidence="4" ref="1">
    <original>EL</original>
    <variation>DV</variation>
    <location>
        <begin position="49"/>
        <end position="50"/>
    </location>
</feature>
<feature type="sequence conflict" description="In Ref. 1; AAP23937." evidence="4" ref="1">
    <original>T</original>
    <variation>TA</variation>
    <location>
        <position position="155"/>
    </location>
</feature>
<feature type="sequence conflict" description="In Ref. 1; AAP23937." evidence="4" ref="1">
    <original>LS</original>
    <variation>CP</variation>
    <location>
        <begin position="160"/>
        <end position="161"/>
    </location>
</feature>
<feature type="sequence conflict" description="In Ref. 1; AAP23937." evidence="4" ref="1">
    <original>L</original>
    <variation>V</variation>
    <location>
        <position position="255"/>
    </location>
</feature>
<feature type="sequence conflict" description="In Ref. 2; BAD32149." evidence="4" ref="2">
    <original>R</original>
    <variation>C</variation>
    <location>
        <position position="327"/>
    </location>
</feature>
<feature type="sequence conflict" description="In Ref. 1; AAP23937." evidence="4" ref="1">
    <original>VA</original>
    <variation>SS</variation>
    <location>
        <begin position="363"/>
        <end position="364"/>
    </location>
</feature>
<organism>
    <name type="scientific">Mus musculus</name>
    <name type="common">Mouse</name>
    <dbReference type="NCBI Taxonomy" id="10090"/>
    <lineage>
        <taxon>Eukaryota</taxon>
        <taxon>Metazoa</taxon>
        <taxon>Chordata</taxon>
        <taxon>Craniata</taxon>
        <taxon>Vertebrata</taxon>
        <taxon>Euteleostomi</taxon>
        <taxon>Mammalia</taxon>
        <taxon>Eutheria</taxon>
        <taxon>Euarchontoglires</taxon>
        <taxon>Glires</taxon>
        <taxon>Rodentia</taxon>
        <taxon>Myomorpha</taxon>
        <taxon>Muroidea</taxon>
        <taxon>Muridae</taxon>
        <taxon>Murinae</taxon>
        <taxon>Mus</taxon>
        <taxon>Mus</taxon>
    </lineage>
</organism>
<dbReference type="EMBL" id="AY239226">
    <property type="protein sequence ID" value="AAP23937.1"/>
    <property type="molecule type" value="mRNA"/>
</dbReference>
<dbReference type="EMBL" id="AK172871">
    <property type="protein sequence ID" value="BAD32149.1"/>
    <property type="status" value="ALT_FRAME"/>
    <property type="molecule type" value="Transcribed_RNA"/>
</dbReference>
<dbReference type="EMBL" id="AK036278">
    <property type="protein sequence ID" value="BAC29370.1"/>
    <property type="molecule type" value="mRNA"/>
</dbReference>
<dbReference type="EMBL" id="AK159836">
    <property type="protein sequence ID" value="BAE35414.1"/>
    <property type="molecule type" value="mRNA"/>
</dbReference>
<dbReference type="EMBL" id="CH466545">
    <property type="protein sequence ID" value="EDL29611.1"/>
    <property type="molecule type" value="Genomic_DNA"/>
</dbReference>
<dbReference type="EMBL" id="CH466545">
    <property type="protein sequence ID" value="EDL29614.1"/>
    <property type="molecule type" value="Genomic_DNA"/>
</dbReference>
<dbReference type="EMBL" id="BC022126">
    <property type="protein sequence ID" value="AAH22126.1"/>
    <property type="molecule type" value="mRNA"/>
</dbReference>
<dbReference type="EMBL" id="BC138217">
    <property type="protein sequence ID" value="AAI38218.1"/>
    <property type="molecule type" value="mRNA"/>
</dbReference>
<dbReference type="CCDS" id="CCDS27589.1"/>
<dbReference type="RefSeq" id="NP_001345820.1">
    <property type="nucleotide sequence ID" value="NM_001358891.1"/>
</dbReference>
<dbReference type="RefSeq" id="NP_001345821.1">
    <property type="nucleotide sequence ID" value="NM_001358892.1"/>
</dbReference>
<dbReference type="RefSeq" id="NP_001345822.1">
    <property type="nucleotide sequence ID" value="NM_001358893.1"/>
</dbReference>
<dbReference type="RefSeq" id="NP_663446.1">
    <property type="nucleotide sequence ID" value="NM_145471.3"/>
</dbReference>
<dbReference type="RefSeq" id="XP_006520848.1">
    <property type="nucleotide sequence ID" value="XM_006520785.3"/>
</dbReference>
<dbReference type="RefSeq" id="XP_006520849.1">
    <property type="nucleotide sequence ID" value="XM_006520786.3"/>
</dbReference>
<dbReference type="RefSeq" id="XP_006520850.1">
    <property type="nucleotide sequence ID" value="XM_006520787.3"/>
</dbReference>
<dbReference type="RefSeq" id="XP_006520852.1">
    <property type="nucleotide sequence ID" value="XM_006520789.5"/>
</dbReference>
<dbReference type="RefSeq" id="XP_011243881.1">
    <property type="nucleotide sequence ID" value="XM_011245579.2"/>
</dbReference>
<dbReference type="RefSeq" id="XP_017172047.1">
    <property type="nucleotide sequence ID" value="XM_017316558.3"/>
</dbReference>
<dbReference type="RefSeq" id="XP_017172048.1">
    <property type="nucleotide sequence ID" value="XM_017316559.1"/>
</dbReference>
<dbReference type="RefSeq" id="XP_030104348.1">
    <property type="nucleotide sequence ID" value="XM_030248488.2"/>
</dbReference>
<dbReference type="RefSeq" id="XP_030104349.1">
    <property type="nucleotide sequence ID" value="XM_030248489.2"/>
</dbReference>
<dbReference type="SMR" id="Q8VC16"/>
<dbReference type="FunCoup" id="Q8VC16">
    <property type="interactions" value="1413"/>
</dbReference>
<dbReference type="STRING" id="10090.ENSMUSP00000114921"/>
<dbReference type="iPTMnet" id="Q8VC16"/>
<dbReference type="PhosphoSitePlus" id="Q8VC16"/>
<dbReference type="SwissPalm" id="Q8VC16"/>
<dbReference type="jPOST" id="Q8VC16"/>
<dbReference type="PaxDb" id="10090-ENSMUSP00000121982"/>
<dbReference type="PeptideAtlas" id="Q8VC16"/>
<dbReference type="ProteomicsDB" id="290149"/>
<dbReference type="Pumba" id="Q8VC16"/>
<dbReference type="Antibodypedia" id="14965">
    <property type="antibodies" value="59 antibodies from 17 providers"/>
</dbReference>
<dbReference type="DNASU" id="223664"/>
<dbReference type="Ensembl" id="ENSMUST00000036423.15">
    <property type="protein sequence ID" value="ENSMUSP00000049466.9"/>
    <property type="gene ID" value="ENSMUSG00000033728.15"/>
</dbReference>
<dbReference type="Ensembl" id="ENSMUST00000127208.8">
    <property type="protein sequence ID" value="ENSMUSP00000114921.2"/>
    <property type="gene ID" value="ENSMUSG00000033728.15"/>
</dbReference>
<dbReference type="Ensembl" id="ENSMUST00000137649.8">
    <property type="protein sequence ID" value="ENSMUSP00000121982.2"/>
    <property type="gene ID" value="ENSMUSG00000033728.15"/>
</dbReference>
<dbReference type="Ensembl" id="ENSMUST00000155735.2">
    <property type="protein sequence ID" value="ENSMUSP00000115446.2"/>
    <property type="gene ID" value="ENSMUSG00000033728.15"/>
</dbReference>
<dbReference type="GeneID" id="223664"/>
<dbReference type="KEGG" id="mmu:223664"/>
<dbReference type="UCSC" id="uc007wlx.2">
    <property type="organism name" value="mouse"/>
</dbReference>
<dbReference type="AGR" id="MGI:2445060"/>
<dbReference type="CTD" id="9684"/>
<dbReference type="MGI" id="MGI:2445060">
    <property type="gene designation" value="Lrrc14"/>
</dbReference>
<dbReference type="VEuPathDB" id="HostDB:ENSMUSG00000033728"/>
<dbReference type="eggNOG" id="ENOG502QWSJ">
    <property type="taxonomic scope" value="Eukaryota"/>
</dbReference>
<dbReference type="GeneTree" id="ENSGT01030000234531"/>
<dbReference type="HOGENOM" id="CLU_039635_0_1_1"/>
<dbReference type="InParanoid" id="Q8VC16"/>
<dbReference type="OMA" id="VTECELM"/>
<dbReference type="OrthoDB" id="6479713at2759"/>
<dbReference type="PhylomeDB" id="Q8VC16"/>
<dbReference type="TreeFam" id="TF332708"/>
<dbReference type="Reactome" id="R-MMU-9758274">
    <property type="pathway name" value="Regulation of NF-kappa B signaling"/>
</dbReference>
<dbReference type="BioGRID-ORCS" id="223664">
    <property type="hits" value="0 hits in 76 CRISPR screens"/>
</dbReference>
<dbReference type="ChiTaRS" id="Lrrc14">
    <property type="organism name" value="mouse"/>
</dbReference>
<dbReference type="PRO" id="PR:Q8VC16"/>
<dbReference type="Proteomes" id="UP000000589">
    <property type="component" value="Chromosome 15"/>
</dbReference>
<dbReference type="RNAct" id="Q8VC16">
    <property type="molecule type" value="protein"/>
</dbReference>
<dbReference type="Bgee" id="ENSMUSG00000033728">
    <property type="expression patterns" value="Expressed in embryonic brain and 255 other cell types or tissues"/>
</dbReference>
<dbReference type="ExpressionAtlas" id="Q8VC16">
    <property type="expression patterns" value="baseline and differential"/>
</dbReference>
<dbReference type="GO" id="GO:0005737">
    <property type="term" value="C:cytoplasm"/>
    <property type="evidence" value="ECO:0000250"/>
    <property type="project" value="UniProtKB"/>
</dbReference>
<dbReference type="GO" id="GO:0019900">
    <property type="term" value="F:kinase binding"/>
    <property type="evidence" value="ECO:0007669"/>
    <property type="project" value="Ensembl"/>
</dbReference>
<dbReference type="GO" id="GO:0032088">
    <property type="term" value="P:negative regulation of NF-kappaB transcription factor activity"/>
    <property type="evidence" value="ECO:0000250"/>
    <property type="project" value="UniProtKB"/>
</dbReference>
<dbReference type="GO" id="GO:0034122">
    <property type="term" value="P:negative regulation of toll-like receptor signaling pathway"/>
    <property type="evidence" value="ECO:0000250"/>
    <property type="project" value="UniProtKB"/>
</dbReference>
<dbReference type="FunFam" id="3.80.10.10:FF:000119">
    <property type="entry name" value="Leucine-rich repeat-containing 14 isoform b"/>
    <property type="match status" value="1"/>
</dbReference>
<dbReference type="Gene3D" id="3.80.10.10">
    <property type="entry name" value="Ribonuclease Inhibitor"/>
    <property type="match status" value="1"/>
</dbReference>
<dbReference type="InterPro" id="IPR001611">
    <property type="entry name" value="Leu-rich_rpt"/>
</dbReference>
<dbReference type="InterPro" id="IPR032675">
    <property type="entry name" value="LRR_dom_sf"/>
</dbReference>
<dbReference type="InterPro" id="IPR050694">
    <property type="entry name" value="PRAME_domain"/>
</dbReference>
<dbReference type="PANTHER" id="PTHR14224:SF9">
    <property type="entry name" value="LEUCINE-RICH REPEAT-CONTAINING PROTEIN 14"/>
    <property type="match status" value="1"/>
</dbReference>
<dbReference type="PANTHER" id="PTHR14224">
    <property type="entry name" value="SIMILAR TO PREFERENTIALLY EXPRESSED ANTIGEN IN MELANOMA-LIKE 3"/>
    <property type="match status" value="1"/>
</dbReference>
<dbReference type="Pfam" id="PF13516">
    <property type="entry name" value="LRR_6"/>
    <property type="match status" value="2"/>
</dbReference>
<dbReference type="SUPFAM" id="SSF52047">
    <property type="entry name" value="RNI-like"/>
    <property type="match status" value="1"/>
</dbReference>
<accession>Q8VC16</accession>
<accession>Q6A0E7</accession>
<accession>Q80WK3</accession>